<feature type="chain" id="PRO_0000181268" description="Epithelial sodium channel subunit beta">
    <location>
        <begin position="1"/>
        <end position="640"/>
    </location>
</feature>
<feature type="topological domain" description="Cytoplasmic" evidence="23 24 41 42">
    <location>
        <begin position="1"/>
        <end position="50"/>
    </location>
</feature>
<feature type="transmembrane region" description="Helical; Name=1" evidence="3">
    <location>
        <begin position="51"/>
        <end position="71"/>
    </location>
</feature>
<feature type="topological domain" description="Extracellular" evidence="23 24 41 42">
    <location>
        <begin position="72"/>
        <end position="532"/>
    </location>
</feature>
<feature type="transmembrane region" description="Helical; Name=2" evidence="3">
    <location>
        <begin position="533"/>
        <end position="553"/>
    </location>
</feature>
<feature type="topological domain" description="Cytoplasmic" evidence="23 24 41 42">
    <location>
        <begin position="554"/>
        <end position="640"/>
    </location>
</feature>
<feature type="region of interest" description="Disordered" evidence="4">
    <location>
        <begin position="590"/>
        <end position="640"/>
    </location>
</feature>
<feature type="short sequence motif" description="PY motif; recruits WW domain-containing proteins and is thereby required for ubiquitination and inhibition of the channel by NEDD4 and NEDD4L" evidence="14 34">
    <location>
        <begin position="616"/>
        <end position="620"/>
    </location>
</feature>
<feature type="compositionally biased region" description="Acidic residues" evidence="4">
    <location>
        <begin position="631"/>
        <end position="640"/>
    </location>
</feature>
<feature type="modified residue" description="Phosphoserine" evidence="2">
    <location>
        <position position="633"/>
    </location>
</feature>
<feature type="modified residue" description="Phosphoserine" evidence="2">
    <location>
        <position position="635"/>
    </location>
</feature>
<feature type="glycosylation site" description="N-linked (GlcNAc...) asparagine" evidence="3">
    <location>
        <position position="260"/>
    </location>
</feature>
<feature type="disulfide bond" evidence="23 24 41 42">
    <location>
        <begin position="98"/>
        <end position="272"/>
    </location>
</feature>
<feature type="disulfide bond" evidence="23 24 41 42">
    <location>
        <begin position="184"/>
        <end position="189"/>
    </location>
</feature>
<feature type="disulfide bond" evidence="23 24 41 42">
    <location>
        <begin position="196"/>
        <end position="203"/>
    </location>
</feature>
<feature type="disulfide bond" evidence="23 24 41 42">
    <location>
        <begin position="249"/>
        <end position="256"/>
    </location>
</feature>
<feature type="disulfide bond" evidence="23 24 41 42">
    <location>
        <begin position="361"/>
        <end position="448"/>
    </location>
</feature>
<feature type="disulfide bond" evidence="23 24 41 42">
    <location>
        <begin position="386"/>
        <end position="444"/>
    </location>
</feature>
<feature type="disulfide bond" evidence="23 24 41 42">
    <location>
        <begin position="390"/>
        <end position="440"/>
    </location>
</feature>
<feature type="disulfide bond" evidence="23 24 41 42">
    <location>
        <begin position="399"/>
        <end position="426"/>
    </location>
</feature>
<feature type="disulfide bond" evidence="23 24 41 42">
    <location>
        <begin position="401"/>
        <end position="415"/>
    </location>
</feature>
<feature type="splice variant" id="VSP_007724" description="In isoform 2." evidence="38">
    <original>M</original>
    <variation>MLLHINPAYLFKLLHGFPPWIMPTDGNLGDKNFQMGKPGHREGATM</variation>
    <location>
        <position position="1"/>
    </location>
</feature>
<feature type="sequence variant" id="VAR_007127" description="In PHA1B2; dbSNP:rs137852706." evidence="29">
    <original>G</original>
    <variation>S</variation>
    <location>
        <position position="37"/>
    </location>
</feature>
<feature type="sequence variant" id="VAR_062401" description="In BESC1; dbSNP:rs35731153." evidence="11 16">
    <original>S</original>
    <variation>C</variation>
    <location>
        <position position="82"/>
    </location>
</feature>
<feature type="sequence variant" id="VAR_062402" description="In BESC1; decreased channel activity; dbSNP:rs137852709." evidence="11">
    <original>P</original>
    <variation>L</variation>
    <location>
        <position position="267"/>
    </location>
</feature>
<feature type="sequence variant" id="VAR_062403" description="In BESC1; dbSNP:rs137852712." evidence="16">
    <original>N</original>
    <variation>S</variation>
    <location>
        <position position="288"/>
    </location>
</feature>
<feature type="sequence variant" id="VAR_062404" description="In BESC1; increased channel activity; dbSNP:rs72654338." evidence="11">
    <original>G</original>
    <variation>S</variation>
    <location>
        <position position="294"/>
    </location>
</feature>
<feature type="sequence variant" id="VAR_036480" description="In a colorectal cancer sample; somatic mutation; dbSNP:rs777888930." evidence="13">
    <original>A</original>
    <variation>V</variation>
    <location>
        <position position="311"/>
    </location>
</feature>
<feature type="sequence variant" id="VAR_036481" description="In a breast cancer sample; somatic mutation." evidence="13">
    <original>A</original>
    <variation>V</variation>
    <location>
        <position position="314"/>
    </location>
</feature>
<feature type="sequence variant" id="VAR_015836" evidence="5 27">
    <original>A</original>
    <variation>P</variation>
    <location>
        <position position="336"/>
    </location>
</feature>
<feature type="sequence variant" id="VAR_062405" description="In BESC1; dbSNP:rs61759921." evidence="18">
    <original>V</original>
    <variation>M</variation>
    <location>
        <position position="348"/>
    </location>
</feature>
<feature type="sequence variant" id="VAR_062406" description="In BESC1; dbSNP:rs137852711." evidence="16">
    <original>P</original>
    <variation>T</variation>
    <location>
        <position position="369"/>
    </location>
</feature>
<feature type="sequence variant" id="VAR_036482" description="In a breast cancer sample; somatic mutation." evidence="13">
    <original>L</original>
    <variation>V</variation>
    <location>
        <position position="387"/>
    </location>
</feature>
<feature type="sequence variant" id="VAR_015837" description="In dbSNP:rs201330438." evidence="33">
    <original>V</original>
    <variation>M</variation>
    <location>
        <position position="434"/>
    </location>
</feature>
<feature type="sequence variant" id="VAR_014891" description="In dbSNP:rs1799980." evidence="18 33">
    <original>G</original>
    <variation>V</variation>
    <location>
        <position position="442"/>
    </location>
</feature>
<feature type="sequence variant" id="VAR_062407" description="In BESC1; decreased channel activity; dbSNP:rs137852710." evidence="11">
    <original>E</original>
    <variation>K</variation>
    <location>
        <position position="539"/>
    </location>
</feature>
<feature type="sequence variant" id="VAR_026519" description="Associated with hypertension in South African Black; dbSNP:rs149868979." evidence="9">
    <original>R</original>
    <variation>Q</variation>
    <location>
        <position position="563"/>
    </location>
</feature>
<feature type="sequence variant" id="VAR_015838" description="In dbSNP:rs61759926." evidence="33">
    <original>G</original>
    <variation>S</variation>
    <location>
        <position position="589"/>
    </location>
</feature>
<feature type="sequence variant" id="VAR_014892" description="In dbSNP:rs1799979." evidence="33">
    <original>T</original>
    <variation>M</variation>
    <location>
        <position position="594"/>
    </location>
</feature>
<feature type="sequence variant" id="VAR_015839" description="In dbSNP:rs140945152." evidence="33">
    <original>R</original>
    <variation>H</variation>
    <location>
        <position position="597"/>
    </location>
</feature>
<feature type="sequence variant" id="VAR_007128" description="In LIDLS1; dbSNP:rs387906402." evidence="26 28 35">
    <original>P</original>
    <variation>L</variation>
    <location>
        <position position="616"/>
    </location>
</feature>
<feature type="sequence variant" id="VAR_007129" description="In LIDLS1." evidence="35">
    <original>P</original>
    <variation>S</variation>
    <location>
        <position position="616"/>
    </location>
</feature>
<feature type="sequence variant" id="VAR_026520" description="In LIDLS1; dbSNP:rs137852708." evidence="32">
    <original>P</original>
    <variation>S</variation>
    <location>
        <position position="617"/>
    </location>
</feature>
<feature type="sequence variant" id="VAR_026521" description="In LIDLS1; dbSNP:rs137852705." evidence="10">
    <original>P</original>
    <variation>R</variation>
    <location>
        <position position="618"/>
    </location>
</feature>
<feature type="sequence variant" id="VAR_026522" description="In LIDLS1; constitutive channel activation; dbSNP:rs137852707." evidence="30">
    <original>Y</original>
    <variation>H</variation>
    <location>
        <position position="620"/>
    </location>
</feature>
<feature type="sequence variant" id="VAR_015840" description="In dbSNP:rs372132399." evidence="33">
    <original>R</original>
    <variation>C</variation>
    <location>
        <position position="624"/>
    </location>
</feature>
<feature type="sequence variant" id="VAR_015841" evidence="33">
    <original>E</original>
    <variation>G</variation>
    <location>
        <position position="632"/>
    </location>
</feature>
<feature type="mutagenesis site" description="Loss of inhibition of the ENaC channel by NEDD4. Loss of ubiquitination by NEDD4L." evidence="14 34">
    <original>Y</original>
    <variation>A</variation>
    <location>
        <position position="620"/>
    </location>
</feature>
<feature type="sequence conflict" description="In Ref. 6; AAH36352." evidence="39" ref="6">
    <original>I</original>
    <variation>T</variation>
    <location>
        <position position="41"/>
    </location>
</feature>
<feature type="sequence conflict" description="In Ref. 1; CAA60632." evidence="39" ref="1">
    <original>A</original>
    <variation>G</variation>
    <location>
        <position position="314"/>
    </location>
</feature>
<feature type="sequence conflict" description="In Ref. 2; AAA75459." evidence="39" ref="2">
    <original>Y</original>
    <variation>F</variation>
    <location>
        <position position="498"/>
    </location>
</feature>
<feature type="strand" evidence="43">
    <location>
        <begin position="79"/>
        <end position="86"/>
    </location>
</feature>
<feature type="strand" evidence="43">
    <location>
        <begin position="94"/>
        <end position="103"/>
    </location>
</feature>
<feature type="helix" evidence="43">
    <location>
        <begin position="105"/>
        <end position="107"/>
    </location>
</feature>
<feature type="turn" evidence="43">
    <location>
        <begin position="108"/>
        <end position="111"/>
    </location>
</feature>
<feature type="helix" evidence="43">
    <location>
        <begin position="113"/>
        <end position="126"/>
    </location>
</feature>
<feature type="helix" evidence="44">
    <location>
        <begin position="129"/>
        <end position="131"/>
    </location>
</feature>
<feature type="helix" evidence="43">
    <location>
        <begin position="142"/>
        <end position="145"/>
    </location>
</feature>
<feature type="strand" evidence="43">
    <location>
        <begin position="150"/>
        <end position="154"/>
    </location>
</feature>
<feature type="strand" evidence="43">
    <location>
        <begin position="162"/>
        <end position="165"/>
    </location>
</feature>
<feature type="strand" evidence="43">
    <location>
        <begin position="186"/>
        <end position="196"/>
    </location>
</feature>
<feature type="strand" evidence="43">
    <location>
        <begin position="201"/>
        <end position="210"/>
    </location>
</feature>
<feature type="helix" evidence="43">
    <location>
        <begin position="211"/>
        <end position="227"/>
    </location>
</feature>
<feature type="helix" evidence="43">
    <location>
        <begin position="232"/>
        <end position="236"/>
    </location>
</feature>
<feature type="helix" evidence="43">
    <location>
        <begin position="242"/>
        <end position="245"/>
    </location>
</feature>
<feature type="strand" evidence="43">
    <location>
        <begin position="246"/>
        <end position="251"/>
    </location>
</feature>
<feature type="strand" evidence="44">
    <location>
        <begin position="254"/>
        <end position="256"/>
    </location>
</feature>
<feature type="helix" evidence="43">
    <location>
        <begin position="258"/>
        <end position="260"/>
    </location>
</feature>
<feature type="strand" evidence="43">
    <location>
        <begin position="261"/>
        <end position="266"/>
    </location>
</feature>
<feature type="turn" evidence="43">
    <location>
        <begin position="267"/>
        <end position="269"/>
    </location>
</feature>
<feature type="strand" evidence="43">
    <location>
        <begin position="270"/>
        <end position="276"/>
    </location>
</feature>
<feature type="strand" evidence="43">
    <location>
        <begin position="279"/>
        <end position="281"/>
    </location>
</feature>
<feature type="helix" evidence="43">
    <location>
        <begin position="291"/>
        <end position="293"/>
    </location>
</feature>
<feature type="strand" evidence="43">
    <location>
        <begin position="294"/>
        <end position="300"/>
    </location>
</feature>
<feature type="helix" evidence="43">
    <location>
        <begin position="303"/>
        <end position="305"/>
    </location>
</feature>
<feature type="turn" evidence="43">
    <location>
        <begin position="308"/>
        <end position="310"/>
    </location>
</feature>
<feature type="strand" evidence="43">
    <location>
        <begin position="315"/>
        <end position="321"/>
    </location>
</feature>
<feature type="strand" evidence="43">
    <location>
        <begin position="323"/>
        <end position="325"/>
    </location>
</feature>
<feature type="turn" evidence="43">
    <location>
        <begin position="329"/>
        <end position="331"/>
    </location>
</feature>
<feature type="strand" evidence="44">
    <location>
        <begin position="334"/>
        <end position="336"/>
    </location>
</feature>
<feature type="strand" evidence="43">
    <location>
        <begin position="340"/>
        <end position="352"/>
    </location>
</feature>
<feature type="turn" evidence="43">
    <location>
        <begin position="356"/>
        <end position="358"/>
    </location>
</feature>
<feature type="strand" evidence="43">
    <location>
        <begin position="359"/>
        <end position="365"/>
    </location>
</feature>
<feature type="helix" evidence="43">
    <location>
        <begin position="375"/>
        <end position="377"/>
    </location>
</feature>
<feature type="helix" evidence="43">
    <location>
        <begin position="383"/>
        <end position="398"/>
    </location>
</feature>
<feature type="strand" evidence="43">
    <location>
        <begin position="399"/>
        <end position="402"/>
    </location>
</feature>
<feature type="turn" evidence="43">
    <location>
        <begin position="417"/>
        <end position="419"/>
    </location>
</feature>
<feature type="helix" evidence="43">
    <location>
        <begin position="423"/>
        <end position="431"/>
    </location>
</feature>
<feature type="helix" evidence="43">
    <location>
        <begin position="434"/>
        <end position="443"/>
    </location>
</feature>
<feature type="strand" evidence="43">
    <location>
        <begin position="446"/>
        <end position="453"/>
    </location>
</feature>
<feature type="strand" evidence="43">
    <location>
        <begin position="456"/>
        <end position="458"/>
    </location>
</feature>
<feature type="turn" evidence="43">
    <location>
        <begin position="465"/>
        <end position="467"/>
    </location>
</feature>
<feature type="helix" evidence="43">
    <location>
        <begin position="468"/>
        <end position="480"/>
    </location>
</feature>
<feature type="turn" evidence="43">
    <location>
        <begin position="489"/>
        <end position="491"/>
    </location>
</feature>
<feature type="strand" evidence="43">
    <location>
        <begin position="492"/>
        <end position="511"/>
    </location>
</feature>
<accession>P51168</accession>
<accession>C5HTZ2</accession>
<accession>O60891</accession>
<accession>Q96KG2</accession>
<accession>Q9UJ32</accession>
<accession>Q9UMU5</accession>
<organism>
    <name type="scientific">Homo sapiens</name>
    <name type="common">Human</name>
    <dbReference type="NCBI Taxonomy" id="9606"/>
    <lineage>
        <taxon>Eukaryota</taxon>
        <taxon>Metazoa</taxon>
        <taxon>Chordata</taxon>
        <taxon>Craniata</taxon>
        <taxon>Vertebrata</taxon>
        <taxon>Euteleostomi</taxon>
        <taxon>Mammalia</taxon>
        <taxon>Eutheria</taxon>
        <taxon>Euarchontoglires</taxon>
        <taxon>Primates</taxon>
        <taxon>Haplorrhini</taxon>
        <taxon>Catarrhini</taxon>
        <taxon>Hominidae</taxon>
        <taxon>Homo</taxon>
    </lineage>
</organism>
<gene>
    <name evidence="37 40" type="primary">SCNN1B</name>
</gene>
<name>SCNNB_HUMAN</name>
<proteinExistence type="evidence at protein level"/>
<reference key="1">
    <citation type="journal article" date="1995" name="Genomics">
        <title>Cloning, chromosomal localization, and physical linkage of the beta and gamma subunits (SCNN1B and SCNN1G) of the human epithelial amiloride-sensitive sodium channel.</title>
        <authorList>
            <person name="Voilley N."/>
            <person name="Bassilana F."/>
            <person name="Mignon C."/>
            <person name="Merscher S."/>
            <person name="Mattei M.-G."/>
            <person name="Carle G.F."/>
            <person name="Lazdunski M."/>
            <person name="Barbry P."/>
        </authorList>
    </citation>
    <scope>NUCLEOTIDE SEQUENCE [MRNA] (ISOFORM 1)</scope>
    <source>
        <tissue>Lung</tissue>
    </source>
</reference>
<reference key="2">
    <citation type="journal article" date="1995" name="Am. J. Physiol.">
        <title>Cloning and expression of the beta- and gamma-subunits of the human epithelial sodium channel.</title>
        <authorList>
            <person name="McDonald F.J."/>
            <person name="Snyder P.M."/>
            <person name="Price M.P."/>
            <person name="Welsh M.J."/>
        </authorList>
    </citation>
    <scope>NUCLEOTIDE SEQUENCE [MRNA] (ISOFORM 1)</scope>
    <scope>VARIANT PRO-336</scope>
    <scope>FUNCTION</scope>
    <scope>TRANSPORTER ACTIVITY</scope>
    <scope>ACTIVITY REGULATION</scope>
    <scope>SUBCELLULAR LOCATION</scope>
    <scope>GLYCOSYLATION</scope>
    <scope>TISSUE SPECIFICITY</scope>
    <source>
        <tissue>Kidney</tissue>
    </source>
</reference>
<reference key="3">
    <citation type="journal article" date="1998" name="Biochem. Biophys. Res. Commun.">
        <title>Gene structure of the human amiloride-sensitive epithelial sodium channel beta subunit.</title>
        <authorList>
            <person name="Saxena A."/>
            <person name="Hanukoglu I."/>
            <person name="Strautnieks S.S."/>
            <person name="Thompson R.J."/>
            <person name="Gardiner R.M."/>
            <person name="Hanukoglu A."/>
        </authorList>
    </citation>
    <scope>NUCLEOTIDE SEQUENCE [GENOMIC DNA]</scope>
    <source>
        <tissue>Epithelium</tissue>
    </source>
</reference>
<reference key="4">
    <citation type="journal article" date="2002" name="J. Clin. Endocrinol. Metab.">
        <title>Novel mutations responsible for autosomal recessive multisystem pseudohypoaldosteronism and sequence variants in epithelial sodium channel alpha-, beta-, and gamma-subunit genes.</title>
        <authorList>
            <person name="Saxena A."/>
            <person name="Hanukoglu I."/>
            <person name="Saxena D."/>
            <person name="Thompson R.J."/>
            <person name="Gardiner R.M."/>
            <person name="Hanukoglu A."/>
        </authorList>
    </citation>
    <scope>NUCLEOTIDE SEQUENCE [GENOMIC DNA]</scope>
    <scope>FUNCTION</scope>
</reference>
<reference key="5">
    <citation type="submission" date="2008-12" db="EMBL/GenBank/DDBJ databases">
        <authorList>
            <consortium name="NHLBI resequencing and genotyping service (RS&amp;G)"/>
        </authorList>
    </citation>
    <scope>NUCLEOTIDE SEQUENCE [GENOMIC DNA]</scope>
</reference>
<reference key="6">
    <citation type="journal article" date="2004" name="Genome Res.">
        <title>The status, quality, and expansion of the NIH full-length cDNA project: the Mammalian Gene Collection (MGC).</title>
        <authorList>
            <consortium name="The MGC Project Team"/>
        </authorList>
    </citation>
    <scope>NUCLEOTIDE SEQUENCE [LARGE SCALE MRNA] (ISOFORM 1)</scope>
    <source>
        <tissue>Brain</tissue>
        <tissue>Lung</tissue>
        <tissue>Testis</tissue>
    </source>
</reference>
<reference key="7">
    <citation type="journal article" date="1999" name="Genomics">
        <title>Genome duplications and other features in 12 Mb of DNA sequence from human chromosome 16p and 16q.</title>
        <authorList>
            <person name="Loftus B.J."/>
            <person name="Kim U.-J."/>
            <person name="Sneddon V.P."/>
            <person name="Kalush F."/>
            <person name="Brandon R."/>
            <person name="Fuhrmann J."/>
            <person name="Mason T."/>
            <person name="Crosby M.L."/>
            <person name="Barnstead M."/>
            <person name="Cronin L."/>
            <person name="Mays A.D."/>
            <person name="Cao Y."/>
            <person name="Xu R.X."/>
            <person name="Kang H.-L."/>
            <person name="Mitchell S."/>
            <person name="Eichler E.E."/>
            <person name="Harris P.C."/>
            <person name="Venter J.C."/>
            <person name="Adams M.D."/>
        </authorList>
    </citation>
    <scope>NUCLEOTIDE SEQUENCE [LARGE SCALE GENOMIC DNA] OF 1-259</scope>
</reference>
<reference key="8">
    <citation type="submission" date="2000-04" db="EMBL/GenBank/DDBJ databases">
        <title>Separate promoters of the human epithelial sodium channel beta subunit direct expression of alternate transcripts that encode N-terminal protein variants.</title>
        <authorList>
            <person name="Thomas C.P."/>
            <person name="Auerbach S.D."/>
            <person name="Loftus R.W."/>
            <person name="Li X."/>
            <person name="Itani O.A."/>
        </authorList>
    </citation>
    <scope>NUCLEOTIDE SEQUENCE [MRNA] OF 1-56 (ISOFORM 2)</scope>
    <source>
        <tissue>Kidney</tissue>
    </source>
</reference>
<reference key="9">
    <citation type="journal article" date="1994" name="Cell">
        <title>Liddle's syndrome: heritable human hypertension caused by mutations in the beta subunit of the epithelial sodium channel.</title>
        <authorList>
            <person name="Shimkets R.A."/>
            <person name="Warnock D.G."/>
            <person name="Bositis C.M."/>
            <person name="Nelson-Williams C."/>
            <person name="Hansson J.H."/>
            <person name="Schambelan M."/>
            <person name="Gill J.R."/>
            <person name="Ulick S."/>
            <person name="Milora R.V."/>
            <person name="Findling J.W."/>
            <person name="Canessa C.M."/>
            <person name="Rossier B.C."/>
            <person name="Lifton R.P."/>
        </authorList>
    </citation>
    <scope>NUCLEOTIDE SEQUENCE [GENOMIC DNA] OF 515-640</scope>
</reference>
<reference key="10">
    <citation type="journal article" date="1991" name="J. Clin. Endocrinol. Metab.">
        <title>Type I pseudohypoaldosteronism includes two clinically and genetically distinct entities with either renal or multiple target organ defects.</title>
        <authorList>
            <person name="Hanukoglu A."/>
        </authorList>
    </citation>
    <scope>DEFINITION OF DIFFERENT FORMS OF PSEUDOHYPOALDOSTERONISM TYPE 1</scope>
</reference>
<reference key="11">
    <citation type="journal article" date="1995" name="J. Biol. Chem.">
        <title>Molecular cloning and functional expression of a novel amiloride-sensitive Na+ channel.</title>
        <authorList>
            <person name="Waldmann R."/>
            <person name="Champigny G."/>
            <person name="Bassilana F."/>
            <person name="Voilley N."/>
            <person name="Lazdunski M."/>
        </authorList>
    </citation>
    <scope>SUBUNIT</scope>
</reference>
<reference key="12">
    <citation type="journal article" date="1997" name="J. Biol. Chem.">
        <title>Identification of novel human WW domain-containing proteins by cloning of ligand targets.</title>
        <authorList>
            <person name="Pirozzi G."/>
            <person name="McConnell S.J."/>
            <person name="Uveges A.J."/>
            <person name="Carter J.M."/>
            <person name="Sparks A.B."/>
            <person name="Kay B.K."/>
            <person name="Fowlkes D.M."/>
        </authorList>
    </citation>
    <scope>INTERACTION WITH WWP1 AND WWP2</scope>
</reference>
<reference key="13">
    <citation type="journal article" date="2001" name="J. Biol. Chem.">
        <title>The Nedd4-like protein KIAA0439 is a potential regulator of the epithelial sodium channel.</title>
        <authorList>
            <person name="Harvey K.F."/>
            <person name="Dinudom A."/>
            <person name="Cook D.I."/>
            <person name="Kumar S."/>
        </authorList>
    </citation>
    <scope>UBIQUITINATION BY NEDD4 AND NEDD4L</scope>
</reference>
<reference key="14">
    <citation type="journal article" date="2002" name="Am. J. Physiol.">
        <title>Ubiquitin-protein ligase WWP2 binds to and downregulates the epithelial Na(+) channel.</title>
        <authorList>
            <person name="McDonald F.J."/>
            <person name="Western A.H."/>
            <person name="McNeil J.D."/>
            <person name="Thomas B.C."/>
            <person name="Olson D.R."/>
            <person name="Snyder P.M."/>
        </authorList>
    </citation>
    <scope>UBIQUITINATION BY NEDD4</scope>
    <scope>INTERACTION WITH WWP2</scope>
</reference>
<reference key="15">
    <citation type="journal article" date="1998" name="J. Biol. Chem.">
        <title>Inhibition of the epithelial Na+ channel by interaction of Nedd4 with a PY motif deleted in Liddle's syndrome.</title>
        <authorList>
            <person name="Goulet C.C."/>
            <person name="Volk K.A."/>
            <person name="Adams C.M."/>
            <person name="Prince L.S."/>
            <person name="Stokes J.B."/>
            <person name="Snyder P.M."/>
        </authorList>
    </citation>
    <scope>FUNCTION</scope>
    <scope>TRANSPORTER ACTIVITY</scope>
    <scope>ACTIVITY REGULATION</scope>
    <scope>UBIQUITINATION BY NEDD4</scope>
    <scope>MOTIF</scope>
    <scope>MUTAGENESIS OF TYR-620</scope>
</reference>
<reference key="16">
    <citation type="journal article" date="2006" name="J. Biol. Chem.">
        <title>Delta-subunit confers novel biophysical features to alpha beta gamma-human epithelial sodium channel (ENaC) via a physical interaction.</title>
        <authorList>
            <person name="Ji H.L."/>
            <person name="Su X.F."/>
            <person name="Kedar S."/>
            <person name="Li J."/>
            <person name="Barbry P."/>
            <person name="Smith P.R."/>
            <person name="Matalon S."/>
            <person name="Benos D.J."/>
        </authorList>
    </citation>
    <scope>SUBUNIT</scope>
</reference>
<reference key="17">
    <citation type="journal article" date="2007" name="J. Biol. Chem.">
        <title>Nedd4-2 catalyzes ubiquitination and degradation of cell surface ENaC.</title>
        <authorList>
            <person name="Zhou R."/>
            <person name="Patel S.V."/>
            <person name="Snyder P.M."/>
        </authorList>
    </citation>
    <scope>UBIQUITINATION BY NEDD4L</scope>
    <scope>MOTIF</scope>
    <scope>MUTAGENESIS OF TYR-620</scope>
</reference>
<reference key="18">
    <citation type="journal article" date="2008" name="J. Biol. Chem.">
        <title>Nedd4-2 induces endocytosis and degradation of proteolytically cleaved epithelial Na+ channels.</title>
        <authorList>
            <person name="Kabra R."/>
            <person name="Knight K.K."/>
            <person name="Zhou R."/>
            <person name="Snyder P.M."/>
        </authorList>
    </citation>
    <scope>SUBCELLULAR LOCATION</scope>
    <scope>UBIQUITINATION</scope>
</reference>
<reference key="19">
    <citation type="journal article" date="2008" name="J. Steroid Biochem. Mol. Biol.">
        <title>Renin-aldosterone response, urinary Na/K ratio and growth in pseudohypoaldosteronism patients with mutations in epithelial sodium channel (ENaC) subunit genes.</title>
        <authorList>
            <person name="Hanukoglu A."/>
            <person name="Edelheit O."/>
            <person name="Shriki Y."/>
            <person name="Gizewska M."/>
            <person name="Dascal N."/>
            <person name="Hanukoglu I."/>
        </authorList>
    </citation>
    <scope>GENOTYPE-PHENOTYPE RELATIONSHIPS IN PHA1B2</scope>
    <scope>LONG-TERM EFFECTS OF MUTATIONS ON PHA1B2</scope>
</reference>
<reference key="20">
    <citation type="journal article" date="2010" name="J. Steroid Biochem. Mol. Biol.">
        <title>Truncated beta epithelial sodium channel (ENaC) subunits responsible for multi-system pseudohypoaldosteronism support partial activity of ENaC.</title>
        <authorList>
            <person name="Edelheit O."/>
            <person name="Hanukoglu I."/>
            <person name="Shriki Y."/>
            <person name="Tfilin M."/>
            <person name="Dascal N."/>
            <person name="Gillis D."/>
            <person name="Hanukoglu A."/>
        </authorList>
    </citation>
    <scope>INVOLVEMENT IN PSEUDOHYPOALDOSTERONISM TYPE 1</scope>
</reference>
<reference key="21">
    <citation type="journal article" date="2012" name="Histochem. Cell Biol.">
        <title>Epithelial sodium channels (ENaC) are uniformly distributed on motile cilia in the oviduct and the respiratory airways.</title>
        <authorList>
            <person name="Enuka Y."/>
            <person name="Hanukoglu I."/>
            <person name="Edelheit O."/>
            <person name="Vaknine H."/>
            <person name="Hanukoglu A."/>
        </authorList>
    </citation>
    <scope>TISSUE SPECIFICITY</scope>
</reference>
<reference key="22">
    <citation type="journal article" date="2012" name="J. Biol. Chem.">
        <title>Regulation of epithelial sodium channel trafficking by proprotein convertase subtilisin/kexin type 9 (PCSK9).</title>
        <authorList>
            <person name="Sharotri V."/>
            <person name="Collier D.M."/>
            <person name="Olson D.R."/>
            <person name="Zhou R."/>
            <person name="Snyder P.M."/>
        </authorList>
    </citation>
    <scope>INTERACTION WITH PCSK9</scope>
</reference>
<reference key="23">
    <citation type="journal article" date="2013" name="Am. J. Physiol.">
        <title>Identification of the SPLUNC1 ENaC-inhibitory domain yields novel strategies to treat sodium hyperabsorption in cystic fibrosis airway epithelial cultures.</title>
        <authorList>
            <person name="Hobbs C.A."/>
            <person name="Blanchard M.G."/>
            <person name="Alijevic O."/>
            <person name="Tan C.D."/>
            <person name="Kellenberger S."/>
            <person name="Bencharit S."/>
            <person name="Cao R."/>
            <person name="Kesimer M."/>
            <person name="Walton W.G."/>
            <person name="Henderson A.G."/>
            <person name="Redinbo M.R."/>
            <person name="Stutts M.J."/>
            <person name="Tarran R."/>
        </authorList>
    </citation>
    <scope>INTERACTION WITH BPIFA1</scope>
    <scope>GLYCOSYLATION</scope>
</reference>
<reference key="24">
    <citation type="journal article" date="2013" name="Proc. Natl. Acad. Sci. U.S.A.">
        <title>Molecular basis for pH-dependent mucosal dehydration in cystic fibrosis airways.</title>
        <authorList>
            <person name="Garland A.L."/>
            <person name="Walton W.G."/>
            <person name="Coakley R.D."/>
            <person name="Tan C.D."/>
            <person name="Gilmore R.C."/>
            <person name="Hobbs C.A."/>
            <person name="Tripathy A."/>
            <person name="Clunes L.A."/>
            <person name="Bencharit S."/>
            <person name="Stutts M.J."/>
            <person name="Betts L."/>
            <person name="Redinbo M.R."/>
            <person name="Tarran R."/>
        </authorList>
    </citation>
    <scope>INTERACTION WITH BPIFA1</scope>
</reference>
<reference key="25">
    <citation type="journal article" date="2016" name="Gene">
        <title>Epithelial sodium channel (ENaC) family: Phylogeny, structure-function, tissue distribution, and associated inherited diseases.</title>
        <authorList>
            <person name="Hanukoglu I."/>
            <person name="Hanukoglu A."/>
        </authorList>
    </citation>
    <scope>NOMENCLATURE</scope>
</reference>
<reference evidence="41" key="26">
    <citation type="journal article" date="2018" name="Elife">
        <title>Structure of the human epithelial sodium channel by cryo-electron microscopy.</title>
        <authorList>
            <person name="Noreng S."/>
            <person name="Bharadwaj A."/>
            <person name="Posert R."/>
            <person name="Yoshioka C."/>
            <person name="Baconguis I."/>
        </authorList>
    </citation>
    <scope>STRUCTURE BY ELECTRON MICROSCOPY (3.90 ANGSTROMS) OF 73-515 IN COMPLEX WITH SCNN1A AND SCNN1G</scope>
    <scope>FUNCTION</scope>
    <scope>TRANSPORTER ACTIVITY</scope>
    <scope>SUBUNIT</scope>
    <scope>TOPOLOGY</scope>
    <scope>REGION</scope>
    <scope>DISULFIDE BOND</scope>
</reference>
<reference evidence="42" key="27">
    <citation type="journal article" date="2020" name="Elife">
        <title>Molecular principles of assembly, activation, and inhibition in epithelial sodium channel.</title>
        <authorList>
            <person name="Noreng S."/>
            <person name="Posert R."/>
            <person name="Bharadwaj A."/>
            <person name="Houser A."/>
            <person name="Baconguis I."/>
        </authorList>
    </citation>
    <scope>STRUCTURE BY ELECTRON MICROSCOPY (3.06 ANGSTROMS) IN COMPLEX WITH SCNN1A AND SCNN1G</scope>
    <scope>FUNCTION</scope>
    <scope>TRANSPORTER ACTIVITY</scope>
    <scope>TOPOLOGY</scope>
    <scope>REGION</scope>
    <scope>DISULFIDE BOND</scope>
</reference>
<reference key="28">
    <citation type="journal article" date="1995" name="Nat. Genet.">
        <title>Hypertension caused by a truncated epithelial sodium channel gamma subunit: genetic heterogeneity of Liddle syndrome.</title>
        <authorList>
            <person name="Hansson J.H."/>
            <person name="Nelson-Williams C."/>
            <person name="Suzuki H."/>
            <person name="Schild L."/>
            <person name="Shimkets R.A."/>
            <person name="Lu Y."/>
            <person name="Canessa C.M."/>
            <person name="Iwasaki T."/>
            <person name="Rossier B.C."/>
            <person name="Lifton R.P."/>
        </authorList>
    </citation>
    <scope>VARIANT LIDLS1 LEU-616</scope>
</reference>
<reference key="29">
    <citation type="journal article" date="1995" name="Proc. Natl. Acad. Sci. U.S.A.">
        <title>A de novo missense mutation of the beta subunit of the epithelial sodium channel causes hypertension and Liddle syndrome, identifying a proline-rich segment critical for regulation of channel activity.</title>
        <authorList>
            <person name="Hansson J.H."/>
            <person name="Schild L."/>
            <person name="Lu Y."/>
            <person name="Wilson T.A."/>
            <person name="Gautschi I."/>
            <person name="Shimkets R.A."/>
            <person name="Nelson-Williams C."/>
            <person name="Rossier B.C."/>
            <person name="Lifton R.P."/>
        </authorList>
    </citation>
    <scope>VARIANT LIDLS1 LEU-616</scope>
</reference>
<reference key="30">
    <citation type="journal article" date="1996" name="J. Clin. Invest.">
        <title>Liddle disease caused by a missense mutation of beta subunit of the epithelial sodium channel gene.</title>
        <authorList>
            <person name="Tamura H."/>
            <person name="Schild L."/>
            <person name="Enomoto N."/>
            <person name="Matsui N."/>
            <person name="Marumo F."/>
            <person name="Rossier B.C."/>
        </authorList>
    </citation>
    <scope>VARIANT LIDLS1 HIS-620</scope>
    <scope>CHARACTERIZATION OF VARIANT LIDLS1 HIS-620</scope>
</reference>
<reference key="31">
    <citation type="journal article" date="1996" name="Nat. Genet.">
        <title>Mutations in subunits of the epithelial sodium channel cause salt wasting with hyperkalaemic acidosis, pseudohypoaldosteronism type 1.</title>
        <authorList>
            <person name="Chang S.S."/>
            <person name="Grunder S."/>
            <person name="Hanukoglu A."/>
            <person name="Roesler A."/>
            <person name="Mathew P.M."/>
            <person name="Hanukoglu I."/>
            <person name="Schild L."/>
            <person name="Lu Y."/>
            <person name="Shimkets R.A."/>
            <person name="Nelson-Williams C."/>
            <person name="Rossier B.C."/>
            <person name="Lifton R.P."/>
        </authorList>
    </citation>
    <scope>VARIANT PHA1B2 SER-37</scope>
</reference>
<reference key="32">
    <citation type="journal article" date="1998" name="Hypertension">
        <title>Genetic analysis of the beta subunit of the epithelial Na+ channel in essential hypertension.</title>
        <authorList>
            <person name="Persu A."/>
            <person name="Barbry P."/>
            <person name="Bassilana F."/>
            <person name="Houot A.-M."/>
            <person name="Mengual R."/>
            <person name="Lazdunski M."/>
            <person name="Corvol P."/>
            <person name="Jeunemaitre X."/>
        </authorList>
    </citation>
    <scope>VARIANTS MET-434; VAL-442; SER-589; MET-594; HIS-597; CYS-624 AND GLY-632</scope>
</reference>
<reference key="33">
    <citation type="journal article" date="1998" name="J. Clin. Endocrinol. Metab.">
        <title>A family with Liddle's syndrome caused by a new missense mutation in the beta subunit of the epithelial sodium channel.</title>
        <authorList>
            <person name="Inoue J."/>
            <person name="Iwaoka T."/>
            <person name="Tokunaga H."/>
            <person name="Takamune K."/>
            <person name="Naomi S."/>
            <person name="Araki M."/>
            <person name="Takahama K."/>
            <person name="Yamaguchi K."/>
            <person name="Tomita K."/>
        </authorList>
    </citation>
    <scope>VARIANT LIDLS1 SER-617</scope>
</reference>
<reference key="34">
    <citation type="journal article" date="1998" name="J. Hypertens.">
        <title>Genetic analysis of the epithelial sodium channel in Liddle's syndrome.</title>
        <authorList>
            <person name="Uehara Y."/>
            <person name="Sasaguri M."/>
            <person name="Kinoshita A."/>
            <person name="Tsuji E."/>
            <person name="Kiyose H."/>
            <person name="Taniguchi H."/>
            <person name="Noda K."/>
            <person name="Ideishi M."/>
            <person name="Inoue J."/>
            <person name="Tomita K."/>
            <person name="Arakawa K."/>
        </authorList>
    </citation>
    <scope>VARIANTS LIDLS1 LEU-616 AND SER-616</scope>
</reference>
<reference key="35">
    <citation type="journal article" date="1999" name="J. Clin. Endocrinol. Metab.">
        <title>Polymorphisms of amiloride-sensitive sodium channel subunits in five sporadic cases of pseudohypoaldosteronism: do they have pathologic potential?</title>
        <authorList>
            <person name="Arai K."/>
            <person name="Zachman K."/>
            <person name="Shibasaki T."/>
            <person name="Chrousos G.P."/>
        </authorList>
    </citation>
    <scope>VARIANT PRO-336</scope>
</reference>
<reference key="36">
    <citation type="journal article" date="2003" name="J. Hypertens.">
        <title>A new mutation, R563Q, of the beta subunit of the epithelial sodium channel associated with low-renin, low-aldosterone hypertension.</title>
        <authorList>
            <person name="Rayner B.L."/>
            <person name="Owen E.P."/>
            <person name="King J.A."/>
            <person name="Soule S.G."/>
            <person name="Vreede H."/>
            <person name="Opie L.H."/>
            <person name="Marais D."/>
            <person name="Davidson J.S."/>
        </authorList>
    </citation>
    <scope>VARIANT GLN-563</scope>
    <scope>ASSOCIATION WITH HYPERTENSION</scope>
</reference>
<reference key="37">
    <citation type="journal article" date="2005" name="Clin. Endocrinol. (Oxf.)">
        <title>Novel mutations in epithelial sodium channel (ENaC) subunit genes and phenotypic expression of multisystem pseudohypoaldosteronism.</title>
        <authorList>
            <person name="Edelheit O."/>
            <person name="Hanukoglu I."/>
            <person name="Gizewska M."/>
            <person name="Kandemir N."/>
            <person name="Tenenbaum-Rakover Y."/>
            <person name="Yurdakoek M."/>
            <person name="Zajaczek S."/>
            <person name="Hanukoglu A."/>
        </authorList>
    </citation>
    <scope>INVOLVEMENT IN PSEUDOHYPOALDOSTERONISM TYPE 1</scope>
</reference>
<reference key="38">
    <citation type="journal article" date="2005" name="Hum. Mol. Genet.">
        <title>Mutations in the beta-subunit of the epithelial Na+ channel in patients with a cystic fibrosis-like syndrome.</title>
        <authorList>
            <person name="Sheridan M.B."/>
            <person name="Fong P."/>
            <person name="Groman J.D."/>
            <person name="Conrad C."/>
            <person name="Flume P."/>
            <person name="Diaz R."/>
            <person name="Harris C."/>
            <person name="Knowles M."/>
            <person name="Cutting G.R."/>
        </authorList>
    </citation>
    <scope>VARIANTS BESC1 CYS-82; LEU-267; SER-294 AND LYS-539</scope>
    <scope>CHARACTERIZATION OF VARIANTS BESC1 LEU-267; SER-294 AND LYS-539</scope>
</reference>
<reference key="39">
    <citation type="journal article" date="2005" name="J. Clin. Endocrinol. Metab.">
        <title>Liddle's syndrome caused by a novel mutation in the proline-rich PY motif of the epithelial sodium channel beta-subunit.</title>
        <authorList>
            <person name="Furuhashi M."/>
            <person name="Kitamura K."/>
            <person name="Adachi M."/>
            <person name="Miyoshi T."/>
            <person name="Wakida N."/>
            <person name="Ura N."/>
            <person name="Shikano Y."/>
            <person name="Shinshi Y."/>
            <person name="Sakamoto K."/>
            <person name="Hayashi M."/>
            <person name="Satoh N."/>
            <person name="Nishitani T."/>
            <person name="Tomita K."/>
            <person name="Shimamoto K."/>
        </authorList>
    </citation>
    <scope>VARIANT LIDLS1 ARG-618</scope>
</reference>
<reference key="40">
    <citation type="journal article" date="2006" name="Science">
        <title>The consensus coding sequences of human breast and colorectal cancers.</title>
        <authorList>
            <person name="Sjoeblom T."/>
            <person name="Jones S."/>
            <person name="Wood L.D."/>
            <person name="Parsons D.W."/>
            <person name="Lin J."/>
            <person name="Barber T.D."/>
            <person name="Mandelker D."/>
            <person name="Leary R.J."/>
            <person name="Ptak J."/>
            <person name="Silliman N."/>
            <person name="Szabo S."/>
            <person name="Buckhaults P."/>
            <person name="Farrell C."/>
            <person name="Meeh P."/>
            <person name="Markowitz S.D."/>
            <person name="Willis J."/>
            <person name="Dawson D."/>
            <person name="Willson J.K.V."/>
            <person name="Gazdar A.F."/>
            <person name="Hartigan J."/>
            <person name="Wu L."/>
            <person name="Liu C."/>
            <person name="Parmigiani G."/>
            <person name="Park B.H."/>
            <person name="Bachman K.E."/>
            <person name="Papadopoulos N."/>
            <person name="Vogelstein B."/>
            <person name="Kinzler K.W."/>
            <person name="Velculescu V.E."/>
        </authorList>
    </citation>
    <scope>VARIANTS [LARGE SCALE ANALYSIS] VAL-311; VAL-314 AND VAL-387</scope>
</reference>
<reference key="41">
    <citation type="journal article" date="2008" name="Respir. Res.">
        <title>Could a defective epithelial sodium channel lead to bronchiectasis.</title>
        <authorList>
            <person name="Fajac I."/>
            <person name="Viel M."/>
            <person name="Sublemontier S."/>
            <person name="Hubert D."/>
            <person name="Bienvenu T."/>
        </authorList>
    </citation>
    <scope>VARIANTS BESC1 CYS-82; SER-288 AND THR-369</scope>
</reference>
<reference key="42">
    <citation type="journal article" date="2009" name="Chest">
        <title>Genetic analysis of Rwandan patients with cystic fibrosis-like symptoms: identification of novel cystic fibrosis transmembrane conductance regulator and epithelial sodium channel gene variants.</title>
        <authorList>
            <person name="Mutesa L."/>
            <person name="Azad A.K."/>
            <person name="Verhaeghe C."/>
            <person name="Segers K."/>
            <person name="Vanbellinghen J.F."/>
            <person name="Ngendahayo L."/>
            <person name="Rusingiza E.K."/>
            <person name="Mutwa P.R."/>
            <person name="Rulisa S."/>
            <person name="Koulischer L."/>
            <person name="Cassiman J.J."/>
            <person name="Cuppens H."/>
            <person name="Bours V."/>
        </authorList>
    </citation>
    <scope>VARIANT BESC1 MET-348</scope>
    <scope>VARIANT VAL-442</scope>
</reference>
<dbReference type="EMBL" id="X87159">
    <property type="protein sequence ID" value="CAA60632.1"/>
    <property type="molecule type" value="mRNA"/>
</dbReference>
<dbReference type="EMBL" id="L36593">
    <property type="protein sequence ID" value="AAA75459.1"/>
    <property type="molecule type" value="mRNA"/>
</dbReference>
<dbReference type="EMBL" id="AJ005383">
    <property type="protein sequence ID" value="CAA06508.2"/>
    <property type="molecule type" value="Genomic_DNA"/>
</dbReference>
<dbReference type="EMBL" id="AJ005384">
    <property type="protein sequence ID" value="CAA06508.2"/>
    <property type="status" value="JOINED"/>
    <property type="molecule type" value="Genomic_DNA"/>
</dbReference>
<dbReference type="EMBL" id="AJ005385">
    <property type="protein sequence ID" value="CAA06508.2"/>
    <property type="status" value="JOINED"/>
    <property type="molecule type" value="Genomic_DNA"/>
</dbReference>
<dbReference type="EMBL" id="AJ005386">
    <property type="protein sequence ID" value="CAA06508.2"/>
    <property type="status" value="JOINED"/>
    <property type="molecule type" value="Genomic_DNA"/>
</dbReference>
<dbReference type="EMBL" id="AJ005387">
    <property type="protein sequence ID" value="CAA06508.2"/>
    <property type="status" value="JOINED"/>
    <property type="molecule type" value="Genomic_DNA"/>
</dbReference>
<dbReference type="EMBL" id="AJ005388">
    <property type="protein sequence ID" value="CAA06508.2"/>
    <property type="status" value="JOINED"/>
    <property type="molecule type" value="Genomic_DNA"/>
</dbReference>
<dbReference type="EMBL" id="AJ005389">
    <property type="protein sequence ID" value="CAA06508.2"/>
    <property type="status" value="JOINED"/>
    <property type="molecule type" value="Genomic_DNA"/>
</dbReference>
<dbReference type="EMBL" id="AJ005390">
    <property type="protein sequence ID" value="CAA06508.2"/>
    <property type="status" value="JOINED"/>
    <property type="molecule type" value="Genomic_DNA"/>
</dbReference>
<dbReference type="EMBL" id="AJ005391">
    <property type="protein sequence ID" value="CAA06508.2"/>
    <property type="status" value="JOINED"/>
    <property type="molecule type" value="Genomic_DNA"/>
</dbReference>
<dbReference type="EMBL" id="AJ005392">
    <property type="protein sequence ID" value="CAA06508.2"/>
    <property type="status" value="JOINED"/>
    <property type="molecule type" value="Genomic_DNA"/>
</dbReference>
<dbReference type="EMBL" id="AJ005393">
    <property type="protein sequence ID" value="CAA06508.2"/>
    <property type="status" value="JOINED"/>
    <property type="molecule type" value="Genomic_DNA"/>
</dbReference>
<dbReference type="EMBL" id="FJ515831">
    <property type="protein sequence ID" value="ACS13723.1"/>
    <property type="molecule type" value="Genomic_DNA"/>
</dbReference>
<dbReference type="EMBL" id="BC036352">
    <property type="protein sequence ID" value="AAH36352.2"/>
    <property type="molecule type" value="mRNA"/>
</dbReference>
<dbReference type="EMBL" id="AC130452">
    <property type="status" value="NOT_ANNOTATED_CDS"/>
    <property type="molecule type" value="Genomic_DNA"/>
</dbReference>
<dbReference type="EMBL" id="AF260226">
    <property type="protein sequence ID" value="AAK49394.1"/>
    <property type="molecule type" value="mRNA"/>
</dbReference>
<dbReference type="EMBL" id="U16023">
    <property type="protein sequence ID" value="AAA67036.1"/>
    <property type="molecule type" value="Genomic_DNA"/>
</dbReference>
<dbReference type="CCDS" id="CCDS10609.1">
    <molecule id="P51168-1"/>
</dbReference>
<dbReference type="PIR" id="I51915">
    <property type="entry name" value="I51915"/>
</dbReference>
<dbReference type="RefSeq" id="NP_000327.2">
    <molecule id="P51168-1"/>
    <property type="nucleotide sequence ID" value="NM_000336.3"/>
</dbReference>
<dbReference type="PDB" id="6BQN">
    <property type="method" value="EM"/>
    <property type="resolution" value="3.90 A"/>
    <property type="chains" value="B=73-515"/>
</dbReference>
<dbReference type="PDB" id="6WTH">
    <property type="method" value="EM"/>
    <property type="resolution" value="3.06 A"/>
    <property type="chains" value="B=1-640"/>
</dbReference>
<dbReference type="PDB" id="9BLR">
    <property type="method" value="EM"/>
    <property type="resolution" value="3.38 A"/>
    <property type="chains" value="B=1-640"/>
</dbReference>
<dbReference type="PDB" id="9BTG">
    <property type="method" value="EM"/>
    <property type="resolution" value="3.12 A"/>
    <property type="chains" value="A/B=1-640"/>
</dbReference>
<dbReference type="PDB" id="9BTU">
    <property type="method" value="EM"/>
    <property type="resolution" value="3.68 A"/>
    <property type="chains" value="B=1-640"/>
</dbReference>
<dbReference type="PDBsum" id="6BQN"/>
<dbReference type="PDBsum" id="6WTH"/>
<dbReference type="PDBsum" id="9BLR"/>
<dbReference type="PDBsum" id="9BTG"/>
<dbReference type="PDBsum" id="9BTU"/>
<dbReference type="EMDB" id="EMD-21896"/>
<dbReference type="EMDB" id="EMD-44674"/>
<dbReference type="EMDB" id="EMD-44889"/>
<dbReference type="EMDB" id="EMD-44896"/>
<dbReference type="EMDB" id="EMD-7130"/>
<dbReference type="SMR" id="P51168"/>
<dbReference type="BioGRID" id="112242">
    <property type="interactions" value="20"/>
</dbReference>
<dbReference type="ComplexPortal" id="CPX-2188">
    <property type="entry name" value="Amiloride-sensitive sodium channel complex, alpha-beta-gamma"/>
</dbReference>
<dbReference type="ComplexPortal" id="CPX-312">
    <property type="entry name" value="Amiloride-sensitive sodium channel complex, delta-alpha-beta-gamma"/>
</dbReference>
<dbReference type="ComplexPortal" id="CPX-313">
    <property type="entry name" value="Amiloride-sensitive sodium channel complex, delta-beta-gamma"/>
</dbReference>
<dbReference type="CORUM" id="P51168"/>
<dbReference type="ELM" id="P51168"/>
<dbReference type="FunCoup" id="P51168">
    <property type="interactions" value="116"/>
</dbReference>
<dbReference type="IntAct" id="P51168">
    <property type="interactions" value="5"/>
</dbReference>
<dbReference type="MINT" id="P51168"/>
<dbReference type="STRING" id="9606.ENSP00000345751"/>
<dbReference type="ChEMBL" id="CHEMBL1628483"/>
<dbReference type="DrugBank" id="DB00594">
    <property type="generic name" value="Amiloride"/>
</dbReference>
<dbReference type="DrugBank" id="DB14509">
    <property type="generic name" value="Lithium carbonate"/>
</dbReference>
<dbReference type="DrugBank" id="DB00384">
    <property type="generic name" value="Triamterene"/>
</dbReference>
<dbReference type="DrugCentral" id="P51168"/>
<dbReference type="GuidetoPHARMACOLOGY" id="739"/>
<dbReference type="TCDB" id="1.A.6.1.1">
    <property type="family name" value="the epithelial na(+) channel (enac) family"/>
</dbReference>
<dbReference type="GlyCosmos" id="P51168">
    <property type="glycosylation" value="1 site, No reported glycans"/>
</dbReference>
<dbReference type="GlyGen" id="P51168">
    <property type="glycosylation" value="5 sites, 7 N-linked glycans (3 sites)"/>
</dbReference>
<dbReference type="iPTMnet" id="P51168"/>
<dbReference type="PhosphoSitePlus" id="P51168"/>
<dbReference type="BioMuta" id="SCNN1B"/>
<dbReference type="DMDM" id="8928561"/>
<dbReference type="MassIVE" id="P51168"/>
<dbReference type="PaxDb" id="9606-ENSP00000345751"/>
<dbReference type="PeptideAtlas" id="P51168"/>
<dbReference type="ProteomicsDB" id="56295">
    <molecule id="P51168-1"/>
</dbReference>
<dbReference type="ProteomicsDB" id="56296">
    <molecule id="P51168-2"/>
</dbReference>
<dbReference type="Antibodypedia" id="2607">
    <property type="antibodies" value="446 antibodies from 31 providers"/>
</dbReference>
<dbReference type="DNASU" id="6338"/>
<dbReference type="Ensembl" id="ENST00000307331.9">
    <molecule id="P51168-2"/>
    <property type="protein sequence ID" value="ENSP00000302874.5"/>
    <property type="gene ID" value="ENSG00000168447.11"/>
</dbReference>
<dbReference type="Ensembl" id="ENST00000343070.7">
    <molecule id="P51168-1"/>
    <property type="protein sequence ID" value="ENSP00000345751.2"/>
    <property type="gene ID" value="ENSG00000168447.11"/>
</dbReference>
<dbReference type="GeneID" id="6338"/>
<dbReference type="KEGG" id="hsa:6338"/>
<dbReference type="MANE-Select" id="ENST00000343070.7">
    <property type="protein sequence ID" value="ENSP00000345751.2"/>
    <property type="RefSeq nucleotide sequence ID" value="NM_000336.3"/>
    <property type="RefSeq protein sequence ID" value="NP_000327.2"/>
</dbReference>
<dbReference type="UCSC" id="uc002dln.3">
    <molecule id="P51168-1"/>
    <property type="organism name" value="human"/>
</dbReference>
<dbReference type="AGR" id="HGNC:10600"/>
<dbReference type="CTD" id="6338"/>
<dbReference type="DisGeNET" id="6338"/>
<dbReference type="GeneCards" id="SCNN1B"/>
<dbReference type="HGNC" id="HGNC:10600">
    <property type="gene designation" value="SCNN1B"/>
</dbReference>
<dbReference type="HPA" id="ENSG00000168447">
    <property type="expression patterns" value="Tissue enhanced (esophagus, intestine)"/>
</dbReference>
<dbReference type="MalaCards" id="SCNN1B"/>
<dbReference type="MIM" id="177200">
    <property type="type" value="phenotype"/>
</dbReference>
<dbReference type="MIM" id="211400">
    <property type="type" value="phenotype"/>
</dbReference>
<dbReference type="MIM" id="600760">
    <property type="type" value="gene"/>
</dbReference>
<dbReference type="MIM" id="620125">
    <property type="type" value="phenotype"/>
</dbReference>
<dbReference type="neXtProt" id="NX_P51168"/>
<dbReference type="OpenTargets" id="ENSG00000168447"/>
<dbReference type="Orphanet" id="171876">
    <property type="disease" value="Generalized pseudohypoaldosteronism type 1"/>
</dbReference>
<dbReference type="Orphanet" id="60033">
    <property type="disease" value="Idiopathic bronchiectasis"/>
</dbReference>
<dbReference type="Orphanet" id="526">
    <property type="disease" value="Liddle syndrome"/>
</dbReference>
<dbReference type="PharmGKB" id="PA306"/>
<dbReference type="VEuPathDB" id="HostDB:ENSG00000168447"/>
<dbReference type="eggNOG" id="KOG4294">
    <property type="taxonomic scope" value="Eukaryota"/>
</dbReference>
<dbReference type="GeneTree" id="ENSGT00940000160893"/>
<dbReference type="InParanoid" id="P51168"/>
<dbReference type="OrthoDB" id="6502088at2759"/>
<dbReference type="PAN-GO" id="P51168">
    <property type="GO annotations" value="3 GO annotations based on evolutionary models"/>
</dbReference>
<dbReference type="PhylomeDB" id="P51168"/>
<dbReference type="TreeFam" id="TF330663"/>
<dbReference type="PathwayCommons" id="P51168"/>
<dbReference type="Reactome" id="R-HSA-2672351">
    <property type="pathway name" value="Stimuli-sensing channels"/>
</dbReference>
<dbReference type="Reactome" id="R-HSA-9730628">
    <property type="pathway name" value="Sensory perception of salty taste"/>
</dbReference>
<dbReference type="SignaLink" id="P51168"/>
<dbReference type="SIGNOR" id="P51168"/>
<dbReference type="BioGRID-ORCS" id="6338">
    <property type="hits" value="8 hits in 1152 CRISPR screens"/>
</dbReference>
<dbReference type="ChiTaRS" id="SCNN1B">
    <property type="organism name" value="human"/>
</dbReference>
<dbReference type="GeneWiki" id="SCNN1B"/>
<dbReference type="GenomeRNAi" id="6338"/>
<dbReference type="Pharos" id="P51168">
    <property type="development level" value="Tclin"/>
</dbReference>
<dbReference type="PRO" id="PR:P51168"/>
<dbReference type="Proteomes" id="UP000005640">
    <property type="component" value="Chromosome 16"/>
</dbReference>
<dbReference type="RNAct" id="P51168">
    <property type="molecule type" value="protein"/>
</dbReference>
<dbReference type="Bgee" id="ENSG00000168447">
    <property type="expression patterns" value="Expressed in lower esophagus mucosa and 126 other cell types or tissues"/>
</dbReference>
<dbReference type="ExpressionAtlas" id="P51168">
    <property type="expression patterns" value="baseline and differential"/>
</dbReference>
<dbReference type="GO" id="GO:0016324">
    <property type="term" value="C:apical plasma membrane"/>
    <property type="evidence" value="ECO:0000314"/>
    <property type="project" value="UniProtKB"/>
</dbReference>
<dbReference type="GO" id="GO:0030659">
    <property type="term" value="C:cytoplasmic vesicle membrane"/>
    <property type="evidence" value="ECO:0007669"/>
    <property type="project" value="UniProtKB-SubCell"/>
</dbReference>
<dbReference type="GO" id="GO:0009897">
    <property type="term" value="C:external side of plasma membrane"/>
    <property type="evidence" value="ECO:0007669"/>
    <property type="project" value="Ensembl"/>
</dbReference>
<dbReference type="GO" id="GO:0070062">
    <property type="term" value="C:extracellular exosome"/>
    <property type="evidence" value="ECO:0000314"/>
    <property type="project" value="UniProtKB"/>
</dbReference>
<dbReference type="GO" id="GO:0005886">
    <property type="term" value="C:plasma membrane"/>
    <property type="evidence" value="ECO:0000314"/>
    <property type="project" value="UniProtKB"/>
</dbReference>
<dbReference type="GO" id="GO:0034706">
    <property type="term" value="C:sodium channel complex"/>
    <property type="evidence" value="ECO:0000314"/>
    <property type="project" value="UniProtKB"/>
</dbReference>
<dbReference type="GO" id="GO:0015280">
    <property type="term" value="F:ligand-gated sodium channel activity"/>
    <property type="evidence" value="ECO:0000318"/>
    <property type="project" value="GO_Central"/>
</dbReference>
<dbReference type="GO" id="GO:0050699">
    <property type="term" value="F:WW domain binding"/>
    <property type="evidence" value="ECO:0000353"/>
    <property type="project" value="BHF-UCL"/>
</dbReference>
<dbReference type="GO" id="GO:0032341">
    <property type="term" value="P:aldosterone metabolic process"/>
    <property type="evidence" value="ECO:0007669"/>
    <property type="project" value="Ensembl"/>
</dbReference>
<dbReference type="GO" id="GO:0014824">
    <property type="term" value="P:artery smooth muscle contraction"/>
    <property type="evidence" value="ECO:0007669"/>
    <property type="project" value="Ensembl"/>
</dbReference>
<dbReference type="GO" id="GO:0071468">
    <property type="term" value="P:cellular response to acidic pH"/>
    <property type="evidence" value="ECO:0000314"/>
    <property type="project" value="ComplexPortal"/>
</dbReference>
<dbReference type="GO" id="GO:1904045">
    <property type="term" value="P:cellular response to aldosterone"/>
    <property type="evidence" value="ECO:0000303"/>
    <property type="project" value="ComplexPortal"/>
</dbReference>
<dbReference type="GO" id="GO:1904117">
    <property type="term" value="P:cellular response to vasopressin"/>
    <property type="evidence" value="ECO:0000303"/>
    <property type="project" value="ComplexPortal"/>
</dbReference>
<dbReference type="GO" id="GO:0042045">
    <property type="term" value="P:epithelial fluid transport"/>
    <property type="evidence" value="ECO:0007669"/>
    <property type="project" value="Ensembl"/>
</dbReference>
<dbReference type="GO" id="GO:0034101">
    <property type="term" value="P:erythrocyte homeostasis"/>
    <property type="evidence" value="ECO:0007669"/>
    <property type="project" value="Ensembl"/>
</dbReference>
<dbReference type="GO" id="GO:0010467">
    <property type="term" value="P:gene expression"/>
    <property type="evidence" value="ECO:0007669"/>
    <property type="project" value="Ensembl"/>
</dbReference>
<dbReference type="GO" id="GO:0006883">
    <property type="term" value="P:intracellular sodium ion homeostasis"/>
    <property type="evidence" value="ECO:0000314"/>
    <property type="project" value="ComplexPortal"/>
</dbReference>
<dbReference type="GO" id="GO:0002269">
    <property type="term" value="P:leukocyte activation involved in inflammatory response"/>
    <property type="evidence" value="ECO:0007669"/>
    <property type="project" value="Ensembl"/>
</dbReference>
<dbReference type="GO" id="GO:0070254">
    <property type="term" value="P:mucus secretion"/>
    <property type="evidence" value="ECO:0007669"/>
    <property type="project" value="Ensembl"/>
</dbReference>
<dbReference type="GO" id="GO:0035264">
    <property type="term" value="P:multicellular organism growth"/>
    <property type="evidence" value="ECO:0007669"/>
    <property type="project" value="Ensembl"/>
</dbReference>
<dbReference type="GO" id="GO:0050891">
    <property type="term" value="P:multicellular organismal-level water homeostasis"/>
    <property type="evidence" value="ECO:0000314"/>
    <property type="project" value="UniProtKB"/>
</dbReference>
<dbReference type="GO" id="GO:0002283">
    <property type="term" value="P:neutrophil activation involved in immune response"/>
    <property type="evidence" value="ECO:0007669"/>
    <property type="project" value="Ensembl"/>
</dbReference>
<dbReference type="GO" id="GO:0070944">
    <property type="term" value="P:neutrophil-mediated killing of bacterium"/>
    <property type="evidence" value="ECO:0007669"/>
    <property type="project" value="Ensembl"/>
</dbReference>
<dbReference type="GO" id="GO:0055075">
    <property type="term" value="P:potassium ion homeostasis"/>
    <property type="evidence" value="ECO:0007669"/>
    <property type="project" value="Ensembl"/>
</dbReference>
<dbReference type="GO" id="GO:0008217">
    <property type="term" value="P:regulation of blood pressure"/>
    <property type="evidence" value="ECO:0000303"/>
    <property type="project" value="ComplexPortal"/>
</dbReference>
<dbReference type="GO" id="GO:0003014">
    <property type="term" value="P:renal system process"/>
    <property type="evidence" value="ECO:0007669"/>
    <property type="project" value="Ensembl"/>
</dbReference>
<dbReference type="GO" id="GO:0032094">
    <property type="term" value="P:response to food"/>
    <property type="evidence" value="ECO:0007669"/>
    <property type="project" value="Ensembl"/>
</dbReference>
<dbReference type="GO" id="GO:0009410">
    <property type="term" value="P:response to xenobiotic stimulus"/>
    <property type="evidence" value="ECO:0007669"/>
    <property type="project" value="Ensembl"/>
</dbReference>
<dbReference type="GO" id="GO:0050914">
    <property type="term" value="P:sensory perception of salty taste"/>
    <property type="evidence" value="ECO:0000303"/>
    <property type="project" value="ComplexPortal"/>
</dbReference>
<dbReference type="GO" id="GO:0050915">
    <property type="term" value="P:sensory perception of sour taste"/>
    <property type="evidence" value="ECO:0000303"/>
    <property type="project" value="ComplexPortal"/>
</dbReference>
<dbReference type="GO" id="GO:0055078">
    <property type="term" value="P:sodium ion homeostasis"/>
    <property type="evidence" value="ECO:0000314"/>
    <property type="project" value="UniProtKB"/>
</dbReference>
<dbReference type="GO" id="GO:0098719">
    <property type="term" value="P:sodium ion import across plasma membrane"/>
    <property type="evidence" value="ECO:0000314"/>
    <property type="project" value="ComplexPortal"/>
</dbReference>
<dbReference type="GO" id="GO:0035725">
    <property type="term" value="P:sodium ion transmembrane transport"/>
    <property type="evidence" value="ECO:0000314"/>
    <property type="project" value="UniProtKB"/>
</dbReference>
<dbReference type="FunFam" id="2.60.470.10:FF:000003">
    <property type="entry name" value="Amiloride-sensitive sodium channel subunit beta"/>
    <property type="match status" value="1"/>
</dbReference>
<dbReference type="FunFam" id="1.10.287.770:FF:000002">
    <property type="entry name" value="Amiloride-sensitive sodium channel subunit beta 1"/>
    <property type="match status" value="1"/>
</dbReference>
<dbReference type="Gene3D" id="2.60.470.10">
    <property type="entry name" value="Acid-sensing ion channels like domains"/>
    <property type="match status" value="1"/>
</dbReference>
<dbReference type="Gene3D" id="1.10.287.770">
    <property type="entry name" value="YojJ-like"/>
    <property type="match status" value="1"/>
</dbReference>
<dbReference type="InterPro" id="IPR001873">
    <property type="entry name" value="ENaC"/>
</dbReference>
<dbReference type="InterPro" id="IPR004724">
    <property type="entry name" value="ENaC_chordates"/>
</dbReference>
<dbReference type="InterPro" id="IPR020903">
    <property type="entry name" value="ENaC_CS"/>
</dbReference>
<dbReference type="NCBIfam" id="TIGR00859">
    <property type="entry name" value="ENaC"/>
    <property type="match status" value="1"/>
</dbReference>
<dbReference type="PANTHER" id="PTHR11690:SF18">
    <property type="entry name" value="AMILORIDE-SENSITIVE SODIUM CHANNEL SUBUNIT BETA"/>
    <property type="match status" value="1"/>
</dbReference>
<dbReference type="PANTHER" id="PTHR11690">
    <property type="entry name" value="AMILORIDE-SENSITIVE SODIUM CHANNEL-RELATED"/>
    <property type="match status" value="1"/>
</dbReference>
<dbReference type="Pfam" id="PF00858">
    <property type="entry name" value="ASC"/>
    <property type="match status" value="1"/>
</dbReference>
<dbReference type="PRINTS" id="PR01078">
    <property type="entry name" value="AMINACHANNEL"/>
</dbReference>
<dbReference type="PROSITE" id="PS01206">
    <property type="entry name" value="ASC"/>
    <property type="match status" value="1"/>
</dbReference>
<keyword id="KW-0002">3D-structure</keyword>
<keyword id="KW-0025">Alternative splicing</keyword>
<keyword id="KW-1003">Cell membrane</keyword>
<keyword id="KW-0968">Cytoplasmic vesicle</keyword>
<keyword id="KW-0225">Disease variant</keyword>
<keyword id="KW-1015">Disulfide bond</keyword>
<keyword id="KW-0325">Glycoprotein</keyword>
<keyword id="KW-0407">Ion channel</keyword>
<keyword id="KW-0406">Ion transport</keyword>
<keyword id="KW-0472">Membrane</keyword>
<keyword id="KW-0597">Phosphoprotein</keyword>
<keyword id="KW-1267">Proteomics identification</keyword>
<keyword id="KW-1185">Reference proteome</keyword>
<keyword id="KW-0915">Sodium</keyword>
<keyword id="KW-0894">Sodium channel</keyword>
<keyword id="KW-0739">Sodium transport</keyword>
<keyword id="KW-0812">Transmembrane</keyword>
<keyword id="KW-1133">Transmembrane helix</keyword>
<keyword id="KW-0813">Transport</keyword>
<keyword id="KW-0832">Ubl conjugation</keyword>
<evidence type="ECO:0000250" key="1">
    <source>
        <dbReference type="UniProtKB" id="P37090"/>
    </source>
</evidence>
<evidence type="ECO:0000250" key="2">
    <source>
        <dbReference type="UniProtKB" id="Q9WU38"/>
    </source>
</evidence>
<evidence type="ECO:0000255" key="3"/>
<evidence type="ECO:0000256" key="4">
    <source>
        <dbReference type="SAM" id="MobiDB-lite"/>
    </source>
</evidence>
<evidence type="ECO:0000269" key="5">
    <source>
    </source>
</evidence>
<evidence type="ECO:0000269" key="6">
    <source>
    </source>
</evidence>
<evidence type="ECO:0000269" key="7">
    <source>
    </source>
</evidence>
<evidence type="ECO:0000269" key="8">
    <source>
    </source>
</evidence>
<evidence type="ECO:0000269" key="9">
    <source>
    </source>
</evidence>
<evidence type="ECO:0000269" key="10">
    <source>
    </source>
</evidence>
<evidence type="ECO:0000269" key="11">
    <source>
    </source>
</evidence>
<evidence type="ECO:0000269" key="12">
    <source>
    </source>
</evidence>
<evidence type="ECO:0000269" key="13">
    <source>
    </source>
</evidence>
<evidence type="ECO:0000269" key="14">
    <source>
    </source>
</evidence>
<evidence type="ECO:0000269" key="15">
    <source>
    </source>
</evidence>
<evidence type="ECO:0000269" key="16">
    <source>
    </source>
</evidence>
<evidence type="ECO:0000269" key="17">
    <source>
    </source>
</evidence>
<evidence type="ECO:0000269" key="18">
    <source>
    </source>
</evidence>
<evidence type="ECO:0000269" key="19">
    <source>
    </source>
</evidence>
<evidence type="ECO:0000269" key="20">
    <source>
    </source>
</evidence>
<evidence type="ECO:0000269" key="21">
    <source>
    </source>
</evidence>
<evidence type="ECO:0000269" key="22">
    <source>
    </source>
</evidence>
<evidence type="ECO:0000269" key="23">
    <source>
    </source>
</evidence>
<evidence type="ECO:0000269" key="24">
    <source>
    </source>
</evidence>
<evidence type="ECO:0000269" key="25">
    <source>
    </source>
</evidence>
<evidence type="ECO:0000269" key="26">
    <source>
    </source>
</evidence>
<evidence type="ECO:0000269" key="27">
    <source>
    </source>
</evidence>
<evidence type="ECO:0000269" key="28">
    <source>
    </source>
</evidence>
<evidence type="ECO:0000269" key="29">
    <source>
    </source>
</evidence>
<evidence type="ECO:0000269" key="30">
    <source>
    </source>
</evidence>
<evidence type="ECO:0000269" key="31">
    <source>
    </source>
</evidence>
<evidence type="ECO:0000269" key="32">
    <source>
    </source>
</evidence>
<evidence type="ECO:0000269" key="33">
    <source>
    </source>
</evidence>
<evidence type="ECO:0000269" key="34">
    <source>
    </source>
</evidence>
<evidence type="ECO:0000269" key="35">
    <source>
    </source>
</evidence>
<evidence type="ECO:0000303" key="36">
    <source>
    </source>
</evidence>
<evidence type="ECO:0000303" key="37">
    <source>
    </source>
</evidence>
<evidence type="ECO:0000303" key="38">
    <source ref="8"/>
</evidence>
<evidence type="ECO:0000305" key="39"/>
<evidence type="ECO:0000312" key="40">
    <source>
        <dbReference type="HGNC" id="HGNC:10600"/>
    </source>
</evidence>
<evidence type="ECO:0007744" key="41">
    <source>
        <dbReference type="PDB" id="6BQN"/>
    </source>
</evidence>
<evidence type="ECO:0007744" key="42">
    <source>
        <dbReference type="PDB" id="6WTH"/>
    </source>
</evidence>
<evidence type="ECO:0007829" key="43">
    <source>
        <dbReference type="PDB" id="6WTH"/>
    </source>
</evidence>
<evidence type="ECO:0007829" key="44">
    <source>
        <dbReference type="PDB" id="9BLR"/>
    </source>
</evidence>
<protein>
    <recommendedName>
        <fullName evidence="36">Epithelial sodium channel subunit beta</fullName>
        <shortName>Beta-ENaC</shortName>
        <shortName evidence="36">ENaC subunit beta</shortName>
        <shortName>ENaCB</shortName>
        <shortName>Epithelial Na(+) channel subunit beta</shortName>
    </recommendedName>
    <alternativeName>
        <fullName>Amiloride-sensitive sodium channel subunit beta</fullName>
    </alternativeName>
    <alternativeName>
        <fullName>Beta-NaCH</fullName>
    </alternativeName>
    <alternativeName>
        <fullName>Nonvoltage-gated sodium channel 1 subunit beta</fullName>
    </alternativeName>
    <alternativeName>
        <fullName>SCNEB</fullName>
    </alternativeName>
</protein>
<comment type="function">
    <text evidence="7 22 23 24 27 34">This is one of the three pore-forming subunits of the heterotrimeric epithelial sodium channel (ENaC), a critical regulator of sodium balance and fluid homeostasis (PubMed:30251954, PubMed:32729833, PubMed:7762608, PubMed:9792722). ENaC operates in epithelial tissues, where it mediates the electrodiffusion of sodium ions from extracellular fluid through the apical membrane of cells, with water following osmotically (PubMed:24124190). It plays a key role in maintaining sodium homeostasis through electrogenic sodium reabsorption in the kidneys (PubMed:12107247). Additionally, ENaC is essential for airway surface liquid homeostasis, which is crucial for proper mucus clearance (PubMed:24124190).</text>
</comment>
<comment type="catalytic activity">
    <reaction evidence="23 24 27 34">
        <text>Na(+)(in) = Na(+)(out)</text>
        <dbReference type="Rhea" id="RHEA:34963"/>
        <dbReference type="ChEBI" id="CHEBI:29101"/>
    </reaction>
</comment>
<comment type="activity regulation">
    <text evidence="27 34">Originally identified and characterized by its inhibition by the diuretic drug amiloride.</text>
</comment>
<comment type="subunit">
    <text evidence="8 12 20 21 22 23 24 25 31">Component of the heterotrimeric epithelial sodium channel (ENaC) composed of an alpha/SCNN1A, a beta/SCNN1B and a gamma/SCNN1G subunit (PubMed:16423824, PubMed:30251954, PubMed:32729833). An additional delta/SCNN1D subunit can replace the alpha/SCNN1A subunit to form an alternative channel with specific properties (PubMed:7499195, PubMed:16423824). Interacts with WWP1 (via WW domains) (PubMed:9169421). Interacts with WWP2 (via WW domains); inhibits the channel (PubMed:12167593, PubMed:9169421). Interacts with the full-length immature form of PCSK9 (pro-PCSK9); inhibits ENaC by promoting its proteasomal degradation (PubMed:22493497). Interacts (N-glycosylated) with BPIFA1; the interaction is direct and inhibits the proteolytic processing of SCNN1A and SCNN1G and the activation of ENaC (PubMed:24043776, PubMed:24124190).</text>
</comment>
<comment type="interaction">
    <interactant intactId="EBI-2547187">
        <id>P51168</id>
    </interactant>
    <interactant intactId="EBI-726944">
        <id>P46934</id>
        <label>NEDD4</label>
    </interactant>
    <organismsDiffer>false</organismsDiffer>
    <experiments>7</experiments>
</comment>
<comment type="subcellular location">
    <subcellularLocation>
        <location evidence="15 27">Apical cell membrane</location>
        <topology evidence="23 24">Multi-pass membrane protein</topology>
    </subcellularLocation>
    <subcellularLocation>
        <location evidence="1">Cytoplasmic vesicle membrane</location>
        <topology evidence="23 24">Multi-pass membrane protein</topology>
    </subcellularLocation>
</comment>
<comment type="alternative products">
    <event type="alternative splicing"/>
    <isoform>
        <id>P51168-1</id>
        <name>1</name>
        <sequence type="displayed"/>
    </isoform>
    <isoform>
        <id>P51168-2</id>
        <name>2</name>
        <sequence type="described" ref="VSP_007724"/>
    </isoform>
</comment>
<comment type="tissue specificity">
    <text evidence="19 27">Detected in placenta, lung and kidney (PubMed:7762608). Expressed in kidney (at protein level) (PubMed:22207244).</text>
</comment>
<comment type="PTM">
    <text evidence="1 6 8 14 15 34">Ubiquitinated. Can be ubiquitinated at multiple sites and undergo monoubiquitination and polyubiquitination. Ubiquitination by NEDD4 or NEDD4L inhibits the ENaC channel through endocytosis, intracellular retention and degradation of its individual subunits (PubMed:11244092, PubMed:12167593, PubMed:17502380, PubMed:18174164, PubMed:9792722). However, some studies could not confirm the ubiquitination of this subunit of the ENaC (By similarity).</text>
</comment>
<comment type="PTM">
    <text evidence="1">Phosphorylated on serine and threonine residues. Aldosterone and insulin increase the basal level of phosphorylation.</text>
</comment>
<comment type="PTM">
    <text evidence="22 27">N-glycosylated. N-glycosylation is required for interaction with BPIFA1.</text>
</comment>
<comment type="disease" evidence="29">
    <disease id="DI-06537">
        <name>Pseudohypoaldosteronism 1B2, autosomal recessive</name>
        <acronym>PHA1B2</acronym>
        <description>A form of pseudohypoaldosteronism type 1, a rare salt wasting disease resulting from target organ unresponsiveness to mineralocorticoids. The disorder affects multiple organs, and is characterized by an often fulminant presentation in the neonatal period with dehydration, hyponatremia, hyperkalemia, metabolic acidosis, failure to thrive and weight loss.</description>
        <dbReference type="MIM" id="620125"/>
    </disease>
    <text evidence="17">The disease is caused by variants affecting the gene represented in this entry. The degree of channel function impairment differentially affects the renin-aldosterone system and urinary Na/K ratios, resulting in distinct genotype-phenotype relationships in PHA1 patients. Loss-of-function mutations are associated with a severe clinical course and age-dependent hyperactivation of the renin-aldosterone system. This feature is not observed in patients with missense mutations that reduce but do not eliminate channel function. Markedly reduced channel activity results in impaired linear growth and delayed puberty (PubMed:18634878).</text>
</comment>
<comment type="disease" evidence="10 26 28 30 32 35">
    <disease id="DI-01905">
        <name>Liddle syndrome 1</name>
        <acronym>LIDLS1</acronym>
        <description>A form of Liddle syndrome, an autosomal dominant disorder characterized by early onset of hypertension, hypokalemic alkalosis, and suppression of plasma renin activity and aldosterone secretion.</description>
        <dbReference type="MIM" id="177200"/>
    </disease>
    <text>The disease is caused by variants affecting the gene represented in this entry.</text>
</comment>
<comment type="disease" evidence="11 16 18">
    <disease id="DI-02489">
        <name>Bronchiectasis with or without elevated sweat chloride 1</name>
        <acronym>BESC1</acronym>
        <description>A debilitating respiratory disease characterized by chronic, abnormal dilatation of the bronchi and other cystic fibrosis-like symptoms in the absence of known causes of bronchiectasis (cystic fibrosis, autoimmune diseases, ciliary dyskinesia, common variable immunodeficiency, foreign body obstruction). Clinical features include sub-normal lung function, sinopulmonary infections, chronic productive cough, excessive sputum production, and elevated sweat chloride in some cases.</description>
        <dbReference type="MIM" id="211400"/>
    </disease>
    <text>The disease is caused by variants affecting the gene represented in this entry.</text>
</comment>
<comment type="similarity">
    <text evidence="39">Belongs to the amiloride-sensitive sodium channel (TC 1.A.6) family. SCNN1B subfamily.</text>
</comment>
<sequence>MHVKKYLLKGLHRLQKGPGYTYKELLVWYCDNTNTHGPKRIICEGPKKKAMWFLLTLLFAALVCWQWGIFIRTYLSWEVSVSLSVGFKTMDFPAVTICNASPFKYSKIKHLLKDLDELMEAVLERILAPELSHANATRNLNFSIWNHTPLVLIDERNPHHPMVLDLFGDNHNGLTSSSASEKICNAHGCKMAMRLCSLNRTQCTFRNFTSATQALTEWYILQATNIFAQVPQQELVEMSYPGEQMILACLFGAEPCNYRNFTSIFYPHYGNCYIFNWGMTEKALPSANPGTEFGLKLILDIGQEDYVPFLASTAGVRLMLHEQRSYPFIRDEGIYAMSGTETSIGVLVDKLQRMGEPYSPCTVNGSEVPVQNFYSDYNTTYSIQACLRSCFQDHMIRNCNCGHYLYPLPRGEKYCNNRDFPDWAHCYSDLQMSVAQRETCIGMCKESCNDTQYKMTISMADWPSEASEDWIFHVLSQERDQSTNITLSRKGIVKLNIYFQEFNYRTIEESAANNIVWLLSNLGGQFGFWMGGSVLCLIEFGEIIIDFVWITIIKLVALAKSLRQRRAQASYAGPPPTVAELVEAHTNFGFQPDTAPRSPNTGPYPSEQALPIPGTPPPNYDSLRLQPLDVIESDSEGDAI</sequence>